<accession>Q9MTJ3</accession>
<proteinExistence type="inferred from homology"/>
<sequence>MVREKVRVSTRTLQWKCVESRVDSKRLYYGRFILSPLMKGQADTIGIAMRRALLGEIEGTCITRAKFEKIPHEYSTIVGIQESVHEILMNLKEIVLRSNLYGTCNASICVKGPGCVTAQDILLPPSVEIIDNTQHIASLMEPIHLCIGLQIERNRGYHIKSPNNFQDGSYPIDAVFMPVRNANHSIHSYGNQNEKQEILFLEIWTNGSLTPKEALHEASRNLIDLFLPFLHAEEENLHLGKNKYNVTFPLFTFHKKLAKLRKPKNEIALKSIFIDQLELPPRIYNSLKGSKIHTLSDLLNKSQEDLMKMKHFRIEDVKQILDILEIEKAFHNRFNEENVENAFISSFFLNKTKGQKKDEMGFESLE</sequence>
<protein>
    <recommendedName>
        <fullName evidence="1">DNA-directed RNA polymerase subunit alpha</fullName>
        <shortName evidence="1">PEP</shortName>
        <ecNumber evidence="1">2.7.7.6</ecNumber>
    </recommendedName>
    <alternativeName>
        <fullName evidence="1">Plastid-encoded RNA polymerase subunit alpha</fullName>
        <shortName evidence="1">RNA polymerase subunit alpha</shortName>
    </alternativeName>
</protein>
<gene>
    <name evidence="1" type="primary">rpoA</name>
</gene>
<comment type="function">
    <text evidence="1">DNA-dependent RNA polymerase catalyzes the transcription of DNA into RNA using the four ribonucleoside triphosphates as substrates.</text>
</comment>
<comment type="catalytic activity">
    <reaction evidence="1">
        <text>RNA(n) + a ribonucleoside 5'-triphosphate = RNA(n+1) + diphosphate</text>
        <dbReference type="Rhea" id="RHEA:21248"/>
        <dbReference type="Rhea" id="RHEA-COMP:14527"/>
        <dbReference type="Rhea" id="RHEA-COMP:17342"/>
        <dbReference type="ChEBI" id="CHEBI:33019"/>
        <dbReference type="ChEBI" id="CHEBI:61557"/>
        <dbReference type="ChEBI" id="CHEBI:140395"/>
        <dbReference type="EC" id="2.7.7.6"/>
    </reaction>
</comment>
<comment type="subunit">
    <text evidence="1">In plastids the minimal PEP RNA polymerase catalytic core is composed of four subunits: alpha, beta, beta', and beta''. When a (nuclear-encoded) sigma factor is associated with the core the holoenzyme is formed, which can initiate transcription.</text>
</comment>
<comment type="subcellular location">
    <subcellularLocation>
        <location>Plastid</location>
        <location>Chloroplast</location>
    </subcellularLocation>
</comment>
<comment type="domain">
    <text evidence="1">The N-terminal domain is essential for RNAP assembly and basal transcription, whereas the C-terminal domain is involved in interaction with transcriptional regulators and with upstream promoter elements.</text>
</comment>
<comment type="similarity">
    <text evidence="1">Belongs to the RNA polymerase alpha chain family.</text>
</comment>
<name>RPOA_OENEH</name>
<feature type="chain" id="PRO_0000175475" description="DNA-directed RNA polymerase subunit alpha">
    <location>
        <begin position="1"/>
        <end position="366"/>
    </location>
</feature>
<feature type="region of interest" description="Alpha N-terminal domain (alpha-NTD)" evidence="1">
    <location>
        <begin position="1"/>
        <end position="233"/>
    </location>
</feature>
<feature type="region of interest" description="Alpha C-terminal domain (alpha-CTD)" evidence="1">
    <location>
        <begin position="264"/>
        <end position="366"/>
    </location>
</feature>
<evidence type="ECO:0000255" key="1">
    <source>
        <dbReference type="HAMAP-Rule" id="MF_00059"/>
    </source>
</evidence>
<dbReference type="EC" id="2.7.7.6" evidence="1"/>
<dbReference type="EMBL" id="AJ271079">
    <property type="protein sequence ID" value="CAB67191.2"/>
    <property type="molecule type" value="Genomic_DNA"/>
</dbReference>
<dbReference type="RefSeq" id="NP_084725.2">
    <property type="nucleotide sequence ID" value="NC_002693.2"/>
</dbReference>
<dbReference type="SMR" id="Q9MTJ3"/>
<dbReference type="GeneID" id="802823"/>
<dbReference type="GO" id="GO:0009507">
    <property type="term" value="C:chloroplast"/>
    <property type="evidence" value="ECO:0007669"/>
    <property type="project" value="UniProtKB-SubCell"/>
</dbReference>
<dbReference type="GO" id="GO:0000428">
    <property type="term" value="C:DNA-directed RNA polymerase complex"/>
    <property type="evidence" value="ECO:0007669"/>
    <property type="project" value="UniProtKB-KW"/>
</dbReference>
<dbReference type="GO" id="GO:0005739">
    <property type="term" value="C:mitochondrion"/>
    <property type="evidence" value="ECO:0007669"/>
    <property type="project" value="GOC"/>
</dbReference>
<dbReference type="GO" id="GO:0003677">
    <property type="term" value="F:DNA binding"/>
    <property type="evidence" value="ECO:0007669"/>
    <property type="project" value="UniProtKB-UniRule"/>
</dbReference>
<dbReference type="GO" id="GO:0003899">
    <property type="term" value="F:DNA-directed RNA polymerase activity"/>
    <property type="evidence" value="ECO:0007669"/>
    <property type="project" value="UniProtKB-UniRule"/>
</dbReference>
<dbReference type="GO" id="GO:0046983">
    <property type="term" value="F:protein dimerization activity"/>
    <property type="evidence" value="ECO:0007669"/>
    <property type="project" value="InterPro"/>
</dbReference>
<dbReference type="GO" id="GO:0006351">
    <property type="term" value="P:DNA-templated transcription"/>
    <property type="evidence" value="ECO:0007669"/>
    <property type="project" value="UniProtKB-UniRule"/>
</dbReference>
<dbReference type="CDD" id="cd06928">
    <property type="entry name" value="RNAP_alpha_NTD"/>
    <property type="match status" value="1"/>
</dbReference>
<dbReference type="FunFam" id="2.170.120.12:FF:000001">
    <property type="entry name" value="DNA-directed RNA polymerase subunit alpha"/>
    <property type="match status" value="1"/>
</dbReference>
<dbReference type="FunFam" id="3.30.1360.10:FF:000039">
    <property type="entry name" value="DNA-directed RNA polymerase subunit alpha"/>
    <property type="match status" value="1"/>
</dbReference>
<dbReference type="Gene3D" id="1.10.150.20">
    <property type="entry name" value="5' to 3' exonuclease, C-terminal subdomain"/>
    <property type="match status" value="1"/>
</dbReference>
<dbReference type="Gene3D" id="2.170.120.12">
    <property type="entry name" value="DNA-directed RNA polymerase, insert domain"/>
    <property type="match status" value="1"/>
</dbReference>
<dbReference type="Gene3D" id="3.30.1360.10">
    <property type="entry name" value="RNA polymerase, RBP11-like subunit"/>
    <property type="match status" value="1"/>
</dbReference>
<dbReference type="HAMAP" id="MF_00059">
    <property type="entry name" value="RNApol_bact_RpoA"/>
    <property type="match status" value="1"/>
</dbReference>
<dbReference type="InterPro" id="IPR011262">
    <property type="entry name" value="DNA-dir_RNA_pol_insert"/>
</dbReference>
<dbReference type="InterPro" id="IPR011263">
    <property type="entry name" value="DNA-dir_RNA_pol_RpoA/D/Rpb3"/>
</dbReference>
<dbReference type="InterPro" id="IPR011773">
    <property type="entry name" value="DNA-dir_RpoA"/>
</dbReference>
<dbReference type="InterPro" id="IPR036603">
    <property type="entry name" value="RBP11-like"/>
</dbReference>
<dbReference type="InterPro" id="IPR011260">
    <property type="entry name" value="RNAP_asu_C"/>
</dbReference>
<dbReference type="InterPro" id="IPR036643">
    <property type="entry name" value="RNApol_insert_sf"/>
</dbReference>
<dbReference type="NCBIfam" id="TIGR02027">
    <property type="entry name" value="rpoA"/>
    <property type="match status" value="1"/>
</dbReference>
<dbReference type="Pfam" id="PF01000">
    <property type="entry name" value="RNA_pol_A_bac"/>
    <property type="match status" value="1"/>
</dbReference>
<dbReference type="Pfam" id="PF03118">
    <property type="entry name" value="RNA_pol_A_CTD"/>
    <property type="match status" value="1"/>
</dbReference>
<dbReference type="Pfam" id="PF01193">
    <property type="entry name" value="RNA_pol_L"/>
    <property type="match status" value="1"/>
</dbReference>
<dbReference type="SMART" id="SM00662">
    <property type="entry name" value="RPOLD"/>
    <property type="match status" value="1"/>
</dbReference>
<dbReference type="SUPFAM" id="SSF47789">
    <property type="entry name" value="C-terminal domain of RNA polymerase alpha subunit"/>
    <property type="match status" value="1"/>
</dbReference>
<dbReference type="SUPFAM" id="SSF56553">
    <property type="entry name" value="Insert subdomain of RNA polymerase alpha subunit"/>
    <property type="match status" value="1"/>
</dbReference>
<dbReference type="SUPFAM" id="SSF55257">
    <property type="entry name" value="RBP11-like subunits of RNA polymerase"/>
    <property type="match status" value="1"/>
</dbReference>
<organism>
    <name type="scientific">Oenothera elata subsp. hookeri</name>
    <name type="common">Hooker's evening primrose</name>
    <name type="synonym">Oenothera hookeri</name>
    <dbReference type="NCBI Taxonomy" id="85636"/>
    <lineage>
        <taxon>Eukaryota</taxon>
        <taxon>Viridiplantae</taxon>
        <taxon>Streptophyta</taxon>
        <taxon>Embryophyta</taxon>
        <taxon>Tracheophyta</taxon>
        <taxon>Spermatophyta</taxon>
        <taxon>Magnoliopsida</taxon>
        <taxon>eudicotyledons</taxon>
        <taxon>Gunneridae</taxon>
        <taxon>Pentapetalae</taxon>
        <taxon>rosids</taxon>
        <taxon>malvids</taxon>
        <taxon>Myrtales</taxon>
        <taxon>Onagraceae</taxon>
        <taxon>Onagroideae</taxon>
        <taxon>Onagreae</taxon>
        <taxon>Oenothera</taxon>
    </lineage>
</organism>
<keyword id="KW-0150">Chloroplast</keyword>
<keyword id="KW-0240">DNA-directed RNA polymerase</keyword>
<keyword id="KW-0548">Nucleotidyltransferase</keyword>
<keyword id="KW-0934">Plastid</keyword>
<keyword id="KW-0804">Transcription</keyword>
<keyword id="KW-0808">Transferase</keyword>
<reference key="1">
    <citation type="journal article" date="2000" name="Mol. Gen. Genet.">
        <title>Complete nucleotide sequence of the Oenothera elata plastid chromosome, representing plastome I of the five distinguishable Euoenothera plastomes.</title>
        <authorList>
            <person name="Hupfer H."/>
            <person name="Swiatek M."/>
            <person name="Hornung S."/>
            <person name="Herrmann R.G."/>
            <person name="Maier R.M."/>
            <person name="Chiu W.-L."/>
            <person name="Sears B."/>
        </authorList>
    </citation>
    <scope>NUCLEOTIDE SEQUENCE [LARGE SCALE GENOMIC DNA]</scope>
    <source>
        <strain>cv. Johansen</strain>
    </source>
</reference>
<reference key="2">
    <citation type="journal article" date="2008" name="Nucleic Acids Res.">
        <title>The complete nucleotide sequences of the five genetically distinct plastid genomes of Oenothera, subsection Oenothera: I. Sequence evaluation and plastome evolution.</title>
        <authorList>
            <person name="Greiner S."/>
            <person name="Wang X."/>
            <person name="Rauwolf U."/>
            <person name="Silber M.V."/>
            <person name="Mayer K."/>
            <person name="Meurer J."/>
            <person name="Haberer G."/>
            <person name="Herrmann R.G."/>
        </authorList>
    </citation>
    <scope>SEQUENCE REVISION TO 5; 21-27; 66 AND 85</scope>
</reference>
<geneLocation type="chloroplast"/>